<feature type="chain" id="PRO_1000024905" description="Ribonuclease PH">
    <location>
        <begin position="1"/>
        <end position="241"/>
    </location>
</feature>
<feature type="binding site" evidence="1">
    <location>
        <position position="89"/>
    </location>
    <ligand>
        <name>phosphate</name>
        <dbReference type="ChEBI" id="CHEBI:43474"/>
        <note>substrate</note>
    </ligand>
</feature>
<feature type="binding site" evidence="1">
    <location>
        <begin position="127"/>
        <end position="129"/>
    </location>
    <ligand>
        <name>phosphate</name>
        <dbReference type="ChEBI" id="CHEBI:43474"/>
        <note>substrate</note>
    </ligand>
</feature>
<protein>
    <recommendedName>
        <fullName evidence="1">Ribonuclease PH</fullName>
        <shortName evidence="1">RNase PH</shortName>
        <ecNumber evidence="1">2.7.7.56</ecNumber>
    </recommendedName>
    <alternativeName>
        <fullName evidence="1">tRNA nucleotidyltransferase</fullName>
    </alternativeName>
</protein>
<organism>
    <name type="scientific">Xanthomonas campestris pv. campestris (strain 8004)</name>
    <dbReference type="NCBI Taxonomy" id="314565"/>
    <lineage>
        <taxon>Bacteria</taxon>
        <taxon>Pseudomonadati</taxon>
        <taxon>Pseudomonadota</taxon>
        <taxon>Gammaproteobacteria</taxon>
        <taxon>Lysobacterales</taxon>
        <taxon>Lysobacteraceae</taxon>
        <taxon>Xanthomonas</taxon>
    </lineage>
</organism>
<sequence length="241" mass="25979">MSFSRPSGRTADQLRPVRIERAFTRHAEGSVLVSFGDTRVLCTASVENRVPNFLRGKGEGWVTAEYGMLPRSTHTRSDREAARGKQGGRTLEIQRLIGRALRACVDRNALGERTITLDCDVLQADGGTRTAAITGAYVALADAVNLLLKRGDIKKHPLIGAVAAVSVGIYRGEPVLDLDYPEDSDCDTDMNVVMNDGGGFIELQGTAEGHAFRRDELNALLALAEKGVGELFELQRAALAG</sequence>
<comment type="function">
    <text evidence="1">Phosphorolytic 3'-5' exoribonuclease that plays an important role in tRNA 3'-end maturation. Removes nucleotide residues following the 3'-CCA terminus of tRNAs; can also add nucleotides to the ends of RNA molecules by using nucleoside diphosphates as substrates, but this may not be physiologically important. Probably plays a role in initiation of 16S rRNA degradation (leading to ribosome degradation) during starvation.</text>
</comment>
<comment type="catalytic activity">
    <reaction evidence="1">
        <text>tRNA(n+1) + phosphate = tRNA(n) + a ribonucleoside 5'-diphosphate</text>
        <dbReference type="Rhea" id="RHEA:10628"/>
        <dbReference type="Rhea" id="RHEA-COMP:17343"/>
        <dbReference type="Rhea" id="RHEA-COMP:17344"/>
        <dbReference type="ChEBI" id="CHEBI:43474"/>
        <dbReference type="ChEBI" id="CHEBI:57930"/>
        <dbReference type="ChEBI" id="CHEBI:173114"/>
        <dbReference type="EC" id="2.7.7.56"/>
    </reaction>
</comment>
<comment type="subunit">
    <text evidence="1">Homohexameric ring arranged as a trimer of dimers.</text>
</comment>
<comment type="similarity">
    <text evidence="1">Belongs to the RNase PH family.</text>
</comment>
<accession>Q4UY39</accession>
<keyword id="KW-0548">Nucleotidyltransferase</keyword>
<keyword id="KW-0694">RNA-binding</keyword>
<keyword id="KW-0698">rRNA processing</keyword>
<keyword id="KW-0808">Transferase</keyword>
<keyword id="KW-0819">tRNA processing</keyword>
<keyword id="KW-0820">tRNA-binding</keyword>
<gene>
    <name evidence="1" type="primary">rph</name>
    <name type="ordered locus">XC_0960</name>
</gene>
<dbReference type="EC" id="2.7.7.56" evidence="1"/>
<dbReference type="EMBL" id="CP000050">
    <property type="protein sequence ID" value="AAY48034.1"/>
    <property type="molecule type" value="Genomic_DNA"/>
</dbReference>
<dbReference type="RefSeq" id="WP_011038353.1">
    <property type="nucleotide sequence ID" value="NZ_CP155948.1"/>
</dbReference>
<dbReference type="SMR" id="Q4UY39"/>
<dbReference type="KEGG" id="xcb:XC_0960"/>
<dbReference type="HOGENOM" id="CLU_050858_0_0_6"/>
<dbReference type="Proteomes" id="UP000000420">
    <property type="component" value="Chromosome"/>
</dbReference>
<dbReference type="GO" id="GO:0000175">
    <property type="term" value="F:3'-5'-RNA exonuclease activity"/>
    <property type="evidence" value="ECO:0007669"/>
    <property type="project" value="UniProtKB-UniRule"/>
</dbReference>
<dbReference type="GO" id="GO:0000049">
    <property type="term" value="F:tRNA binding"/>
    <property type="evidence" value="ECO:0007669"/>
    <property type="project" value="UniProtKB-UniRule"/>
</dbReference>
<dbReference type="GO" id="GO:0009022">
    <property type="term" value="F:tRNA nucleotidyltransferase activity"/>
    <property type="evidence" value="ECO:0007669"/>
    <property type="project" value="UniProtKB-UniRule"/>
</dbReference>
<dbReference type="GO" id="GO:0016075">
    <property type="term" value="P:rRNA catabolic process"/>
    <property type="evidence" value="ECO:0007669"/>
    <property type="project" value="UniProtKB-UniRule"/>
</dbReference>
<dbReference type="GO" id="GO:0006364">
    <property type="term" value="P:rRNA processing"/>
    <property type="evidence" value="ECO:0007669"/>
    <property type="project" value="UniProtKB-KW"/>
</dbReference>
<dbReference type="GO" id="GO:0008033">
    <property type="term" value="P:tRNA processing"/>
    <property type="evidence" value="ECO:0007669"/>
    <property type="project" value="UniProtKB-UniRule"/>
</dbReference>
<dbReference type="CDD" id="cd11362">
    <property type="entry name" value="RNase_PH_bact"/>
    <property type="match status" value="1"/>
</dbReference>
<dbReference type="FunFam" id="3.30.230.70:FF:000003">
    <property type="entry name" value="Ribonuclease PH"/>
    <property type="match status" value="1"/>
</dbReference>
<dbReference type="Gene3D" id="3.30.230.70">
    <property type="entry name" value="GHMP Kinase, N-terminal domain"/>
    <property type="match status" value="1"/>
</dbReference>
<dbReference type="HAMAP" id="MF_00564">
    <property type="entry name" value="RNase_PH"/>
    <property type="match status" value="1"/>
</dbReference>
<dbReference type="InterPro" id="IPR001247">
    <property type="entry name" value="ExoRNase_PH_dom1"/>
</dbReference>
<dbReference type="InterPro" id="IPR015847">
    <property type="entry name" value="ExoRNase_PH_dom2"/>
</dbReference>
<dbReference type="InterPro" id="IPR036345">
    <property type="entry name" value="ExoRNase_PH_dom2_sf"/>
</dbReference>
<dbReference type="InterPro" id="IPR027408">
    <property type="entry name" value="PNPase/RNase_PH_dom_sf"/>
</dbReference>
<dbReference type="InterPro" id="IPR020568">
    <property type="entry name" value="Ribosomal_Su5_D2-typ_SF"/>
</dbReference>
<dbReference type="InterPro" id="IPR050080">
    <property type="entry name" value="RNase_PH"/>
</dbReference>
<dbReference type="InterPro" id="IPR002381">
    <property type="entry name" value="RNase_PH_bac-type"/>
</dbReference>
<dbReference type="InterPro" id="IPR018336">
    <property type="entry name" value="RNase_PH_CS"/>
</dbReference>
<dbReference type="NCBIfam" id="TIGR01966">
    <property type="entry name" value="RNasePH"/>
    <property type="match status" value="1"/>
</dbReference>
<dbReference type="PANTHER" id="PTHR11953">
    <property type="entry name" value="EXOSOME COMPLEX COMPONENT"/>
    <property type="match status" value="1"/>
</dbReference>
<dbReference type="PANTHER" id="PTHR11953:SF0">
    <property type="entry name" value="EXOSOME COMPLEX COMPONENT RRP41"/>
    <property type="match status" value="1"/>
</dbReference>
<dbReference type="Pfam" id="PF01138">
    <property type="entry name" value="RNase_PH"/>
    <property type="match status" value="1"/>
</dbReference>
<dbReference type="Pfam" id="PF03725">
    <property type="entry name" value="RNase_PH_C"/>
    <property type="match status" value="1"/>
</dbReference>
<dbReference type="SUPFAM" id="SSF55666">
    <property type="entry name" value="Ribonuclease PH domain 2-like"/>
    <property type="match status" value="1"/>
</dbReference>
<dbReference type="SUPFAM" id="SSF54211">
    <property type="entry name" value="Ribosomal protein S5 domain 2-like"/>
    <property type="match status" value="1"/>
</dbReference>
<dbReference type="PROSITE" id="PS01277">
    <property type="entry name" value="RIBONUCLEASE_PH"/>
    <property type="match status" value="1"/>
</dbReference>
<proteinExistence type="inferred from homology"/>
<reference key="1">
    <citation type="journal article" date="2005" name="Genome Res.">
        <title>Comparative and functional genomic analyses of the pathogenicity of phytopathogen Xanthomonas campestris pv. campestris.</title>
        <authorList>
            <person name="Qian W."/>
            <person name="Jia Y."/>
            <person name="Ren S.-X."/>
            <person name="He Y.-Q."/>
            <person name="Feng J.-X."/>
            <person name="Lu L.-F."/>
            <person name="Sun Q."/>
            <person name="Ying G."/>
            <person name="Tang D.-J."/>
            <person name="Tang H."/>
            <person name="Wu W."/>
            <person name="Hao P."/>
            <person name="Wang L."/>
            <person name="Jiang B.-L."/>
            <person name="Zeng S."/>
            <person name="Gu W.-Y."/>
            <person name="Lu G."/>
            <person name="Rong L."/>
            <person name="Tian Y."/>
            <person name="Yao Z."/>
            <person name="Fu G."/>
            <person name="Chen B."/>
            <person name="Fang R."/>
            <person name="Qiang B."/>
            <person name="Chen Z."/>
            <person name="Zhao G.-P."/>
            <person name="Tang J.-L."/>
            <person name="He C."/>
        </authorList>
    </citation>
    <scope>NUCLEOTIDE SEQUENCE [LARGE SCALE GENOMIC DNA]</scope>
    <source>
        <strain>8004</strain>
    </source>
</reference>
<name>RNPH_XANC8</name>
<evidence type="ECO:0000255" key="1">
    <source>
        <dbReference type="HAMAP-Rule" id="MF_00564"/>
    </source>
</evidence>